<accession>P69109</accession>
<accession>P35629</accession>
<accession>P51920</accession>
<protein>
    <recommendedName>
        <fullName>Progonadoliberin-3</fullName>
    </recommendedName>
    <alternativeName>
        <fullName>Progonadoliberin III</fullName>
    </alternativeName>
    <component>
        <recommendedName>
            <fullName>Gonadoliberin-3</fullName>
        </recommendedName>
        <alternativeName>
            <fullName>Gonadoliberin III</fullName>
        </alternativeName>
        <alternativeName>
            <fullName>Gonadotropin-releasing hormone III</fullName>
            <shortName>GnRH III</shortName>
        </alternativeName>
        <alternativeName>
            <fullName>Luliberin III</fullName>
        </alternativeName>
        <alternativeName>
            <fullName>Luteinizing hormone-releasing hormone III</fullName>
            <shortName>LH-RH III</shortName>
        </alternativeName>
    </component>
    <component>
        <recommendedName>
            <fullName>GnRH-associated peptide 3</fullName>
        </recommendedName>
        <alternativeName>
            <fullName>GnRH-associated peptide III</fullName>
        </alternativeName>
    </component>
</protein>
<keyword id="KW-0027">Amidation</keyword>
<keyword id="KW-0165">Cleavage on pair of basic residues</keyword>
<keyword id="KW-0372">Hormone</keyword>
<keyword id="KW-0873">Pyrrolidone carboxylic acid</keyword>
<keyword id="KW-0964">Secreted</keyword>
<keyword id="KW-0732">Signal</keyword>
<evidence type="ECO:0000250" key="1"/>
<evidence type="ECO:0000250" key="2">
    <source>
        <dbReference type="UniProtKB" id="P69105"/>
    </source>
</evidence>
<evidence type="ECO:0000269" key="3">
    <source>
    </source>
</evidence>
<evidence type="ECO:0000305" key="4"/>
<reference key="1">
    <citation type="journal article" date="1995" name="Mol. Cell. Endocrinol.">
        <title>Characterization of the pacific salmon gonadotropin-releasing hormone gene, copy number and transcription start site.</title>
        <authorList>
            <person name="Coe I.R."/>
            <person name="von Schalburg K.R."/>
            <person name="Sherwood N.M."/>
        </authorList>
    </citation>
    <scope>NUCLEOTIDE SEQUENCE [GENOMIC DNA]</scope>
    <source>
        <tissue>Liver</tissue>
    </source>
</reference>
<reference key="2">
    <citation type="journal article" date="1995" name="J. Mol. Endocrinol.">
        <title>Two differing precursor genes for the salmon-type gonadotropin-releasing hormone exist in salmonids.</title>
        <authorList>
            <person name="Ashihara M."/>
            <person name="Suzuki M."/>
            <person name="Kubokawa K."/>
            <person name="Aida K."/>
            <person name="Urano A."/>
        </authorList>
    </citation>
    <scope>NUCLEOTIDE SEQUENCE [MRNA]</scope>
    <scope>VARIANT GLN-81</scope>
    <source>
        <strain>Nikko</strain>
        <tissue>Brain</tissue>
    </source>
</reference>
<sequence>MDLSNRTVVQVVVLALVAQVTLSQHWSYGWLPGGKRSVGELEATIKMMDTGGVVALPEETSAHVSERLRPYDVILKKWMPHK</sequence>
<feature type="signal peptide" evidence="1">
    <location>
        <begin position="1"/>
        <end position="23"/>
    </location>
</feature>
<feature type="chain" id="PRO_0000012514" description="Progonadoliberin-3">
    <location>
        <begin position="24"/>
        <end position="82"/>
    </location>
</feature>
<feature type="peptide" id="PRO_0000012515" description="Gonadoliberin-3">
    <location>
        <begin position="24"/>
        <end position="33"/>
    </location>
</feature>
<feature type="peptide" id="PRO_0000012516" description="GnRH-associated peptide 3">
    <location>
        <begin position="37"/>
        <end position="82"/>
    </location>
</feature>
<feature type="modified residue" description="Pyrrolidone carboxylic acid" evidence="2">
    <location>
        <position position="24"/>
    </location>
</feature>
<feature type="modified residue" description="Glycine amide" evidence="2">
    <location>
        <position position="33"/>
    </location>
</feature>
<feature type="sequence variant" evidence="3">
    <original>H</original>
    <variation>Q</variation>
    <location>
        <position position="81"/>
    </location>
</feature>
<proteinExistence type="evidence at transcript level"/>
<organism>
    <name type="scientific">Oncorhynchus nerka</name>
    <name type="common">Sockeye salmon</name>
    <name type="synonym">Salmo nerka</name>
    <dbReference type="NCBI Taxonomy" id="8023"/>
    <lineage>
        <taxon>Eukaryota</taxon>
        <taxon>Metazoa</taxon>
        <taxon>Chordata</taxon>
        <taxon>Craniata</taxon>
        <taxon>Vertebrata</taxon>
        <taxon>Euteleostomi</taxon>
        <taxon>Actinopterygii</taxon>
        <taxon>Neopterygii</taxon>
        <taxon>Teleostei</taxon>
        <taxon>Protacanthopterygii</taxon>
        <taxon>Salmoniformes</taxon>
        <taxon>Salmonidae</taxon>
        <taxon>Salmoninae</taxon>
        <taxon>Oncorhynchus</taxon>
    </lineage>
</organism>
<comment type="function">
    <text>Stimulates the secretion of gonadotropins.</text>
</comment>
<comment type="subcellular location">
    <subcellularLocation>
        <location>Secreted</location>
    </subcellularLocation>
</comment>
<comment type="tissue specificity">
    <text>Brain.</text>
</comment>
<comment type="similarity">
    <text evidence="4">Belongs to the GnRH family.</text>
</comment>
<gene>
    <name type="primary">gnrh3</name>
</gene>
<dbReference type="EMBL" id="X91408">
    <property type="protein sequence ID" value="CAA62751.1"/>
    <property type="molecule type" value="Genomic_DNA"/>
</dbReference>
<dbReference type="EMBL" id="D31869">
    <property type="protein sequence ID" value="BAA06667.1"/>
    <property type="molecule type" value="mRNA"/>
</dbReference>
<dbReference type="RefSeq" id="XP_029525202.1">
    <property type="nucleotide sequence ID" value="XM_029669342.2"/>
</dbReference>
<dbReference type="GeneID" id="115135081"/>
<dbReference type="GO" id="GO:0005615">
    <property type="term" value="C:extracellular space"/>
    <property type="evidence" value="ECO:0000250"/>
    <property type="project" value="UniProtKB"/>
</dbReference>
<dbReference type="GO" id="GO:0005183">
    <property type="term" value="F:gonadotropin hormone-releasing hormone activity"/>
    <property type="evidence" value="ECO:0007669"/>
    <property type="project" value="TreeGrafter"/>
</dbReference>
<dbReference type="GO" id="GO:0031530">
    <property type="term" value="F:gonadotropin-releasing hormone receptor binding"/>
    <property type="evidence" value="ECO:0007669"/>
    <property type="project" value="TreeGrafter"/>
</dbReference>
<dbReference type="InterPro" id="IPR002012">
    <property type="entry name" value="GnRH"/>
</dbReference>
<dbReference type="InterPro" id="IPR019792">
    <property type="entry name" value="Gonadoliberin"/>
</dbReference>
<dbReference type="PANTHER" id="PTHR10522">
    <property type="entry name" value="GONADOLIBERIN"/>
    <property type="match status" value="1"/>
</dbReference>
<dbReference type="PANTHER" id="PTHR10522:SF6">
    <property type="entry name" value="PROGONADOLIBERIN-2"/>
    <property type="match status" value="1"/>
</dbReference>
<dbReference type="Pfam" id="PF00446">
    <property type="entry name" value="GnRH"/>
    <property type="match status" value="1"/>
</dbReference>
<dbReference type="PROSITE" id="PS00473">
    <property type="entry name" value="GNRH"/>
    <property type="match status" value="1"/>
</dbReference>
<name>GON3_ONCNE</name>